<accession>Q1XDS7</accession>
<proteinExistence type="inferred from homology"/>
<reference key="1">
    <citation type="submission" date="2003-11" db="EMBL/GenBank/DDBJ databases">
        <title>Whole genome sequence of Porphyra yezoensis chloroplast.</title>
        <authorList>
            <person name="Kunimoto M."/>
            <person name="Morishima K."/>
            <person name="Yoshikawa M."/>
            <person name="Fukuda S."/>
            <person name="Kobayashi T."/>
            <person name="Kobayashi M."/>
            <person name="Okazaki T."/>
            <person name="Ohara I."/>
            <person name="Nakayama I."/>
        </authorList>
    </citation>
    <scope>NUCLEOTIDE SEQUENCE [LARGE SCALE GENOMIC DNA]</scope>
    <source>
        <strain>U-51</strain>
    </source>
</reference>
<geneLocation type="chloroplast"/>
<dbReference type="EMBL" id="AP006715">
    <property type="protein sequence ID" value="BAE92334.1"/>
    <property type="molecule type" value="Genomic_DNA"/>
</dbReference>
<dbReference type="RefSeq" id="YP_536891.1">
    <property type="nucleotide sequence ID" value="NC_007932.1"/>
</dbReference>
<dbReference type="SMR" id="Q1XDS7"/>
<dbReference type="GeneID" id="3978915"/>
<dbReference type="GO" id="GO:0009507">
    <property type="term" value="C:chloroplast"/>
    <property type="evidence" value="ECO:0007669"/>
    <property type="project" value="UniProtKB-SubCell"/>
</dbReference>
<dbReference type="GO" id="GO:0022625">
    <property type="term" value="C:cytosolic large ribosomal subunit"/>
    <property type="evidence" value="ECO:0007669"/>
    <property type="project" value="TreeGrafter"/>
</dbReference>
<dbReference type="GO" id="GO:0003735">
    <property type="term" value="F:structural constituent of ribosome"/>
    <property type="evidence" value="ECO:0007669"/>
    <property type="project" value="InterPro"/>
</dbReference>
<dbReference type="GO" id="GO:0006412">
    <property type="term" value="P:translation"/>
    <property type="evidence" value="ECO:0007669"/>
    <property type="project" value="UniProtKB-UniRule"/>
</dbReference>
<dbReference type="FunFam" id="2.40.50.100:FF:000004">
    <property type="entry name" value="50S ribosomal protein L27"/>
    <property type="match status" value="1"/>
</dbReference>
<dbReference type="Gene3D" id="2.40.50.100">
    <property type="match status" value="1"/>
</dbReference>
<dbReference type="HAMAP" id="MF_00539">
    <property type="entry name" value="Ribosomal_bL27"/>
    <property type="match status" value="1"/>
</dbReference>
<dbReference type="InterPro" id="IPR001684">
    <property type="entry name" value="Ribosomal_bL27"/>
</dbReference>
<dbReference type="InterPro" id="IPR018261">
    <property type="entry name" value="Ribosomal_bL27_CS"/>
</dbReference>
<dbReference type="NCBIfam" id="TIGR00062">
    <property type="entry name" value="L27"/>
    <property type="match status" value="1"/>
</dbReference>
<dbReference type="PANTHER" id="PTHR15893:SF0">
    <property type="entry name" value="LARGE RIBOSOMAL SUBUNIT PROTEIN BL27M"/>
    <property type="match status" value="1"/>
</dbReference>
<dbReference type="PANTHER" id="PTHR15893">
    <property type="entry name" value="RIBOSOMAL PROTEIN L27"/>
    <property type="match status" value="1"/>
</dbReference>
<dbReference type="Pfam" id="PF01016">
    <property type="entry name" value="Ribosomal_L27"/>
    <property type="match status" value="1"/>
</dbReference>
<dbReference type="PRINTS" id="PR00063">
    <property type="entry name" value="RIBOSOMALL27"/>
</dbReference>
<dbReference type="SUPFAM" id="SSF110324">
    <property type="entry name" value="Ribosomal L27 protein-like"/>
    <property type="match status" value="1"/>
</dbReference>
<dbReference type="PROSITE" id="PS00831">
    <property type="entry name" value="RIBOSOMAL_L27"/>
    <property type="match status" value="1"/>
</dbReference>
<gene>
    <name evidence="1" type="primary">rpl27</name>
</gene>
<protein>
    <recommendedName>
        <fullName evidence="1">Large ribosomal subunit protein bL27c</fullName>
    </recommendedName>
    <alternativeName>
        <fullName evidence="3">50S ribosomal protein L27, chloroplastic</fullName>
    </alternativeName>
</protein>
<evidence type="ECO:0000255" key="1">
    <source>
        <dbReference type="HAMAP-Rule" id="MF_00539"/>
    </source>
</evidence>
<evidence type="ECO:0000256" key="2">
    <source>
        <dbReference type="SAM" id="MobiDB-lite"/>
    </source>
</evidence>
<evidence type="ECO:0000305" key="3"/>
<sequence>MAHKKGSGSTRNGRDSNSKRLGVKKYGGEQVTAGNILIRQRGTKVKPGQNVGKGKDDTLFSLIDGFVLFEKSNQKQKTISVYSAKK</sequence>
<name>RK27_PYRYE</name>
<organism>
    <name type="scientific">Pyropia yezoensis</name>
    <name type="common">Susabi-nori</name>
    <name type="synonym">Porphyra yezoensis</name>
    <dbReference type="NCBI Taxonomy" id="2788"/>
    <lineage>
        <taxon>Eukaryota</taxon>
        <taxon>Rhodophyta</taxon>
        <taxon>Bangiophyceae</taxon>
        <taxon>Bangiales</taxon>
        <taxon>Bangiaceae</taxon>
        <taxon>Pyropia</taxon>
    </lineage>
</organism>
<keyword id="KW-0150">Chloroplast</keyword>
<keyword id="KW-0934">Plastid</keyword>
<keyword id="KW-0687">Ribonucleoprotein</keyword>
<keyword id="KW-0689">Ribosomal protein</keyword>
<feature type="chain" id="PRO_0000276455" description="Large ribosomal subunit protein bL27c">
    <location>
        <begin position="1"/>
        <end position="86"/>
    </location>
</feature>
<feature type="region of interest" description="Disordered" evidence="2">
    <location>
        <begin position="1"/>
        <end position="27"/>
    </location>
</feature>
<comment type="subcellular location">
    <subcellularLocation>
        <location>Plastid</location>
        <location>Chloroplast</location>
    </subcellularLocation>
</comment>
<comment type="similarity">
    <text evidence="1">Belongs to the bacterial ribosomal protein bL27 family.</text>
</comment>